<gene>
    <name type="primary">Tnnt1</name>
</gene>
<keyword id="KW-0025">Alternative splicing</keyword>
<keyword id="KW-0514">Muscle protein</keyword>
<keyword id="KW-0597">Phosphoprotein</keyword>
<keyword id="KW-1185">Reference proteome</keyword>
<evidence type="ECO:0000250" key="1"/>
<evidence type="ECO:0000250" key="2">
    <source>
        <dbReference type="UniProtKB" id="P13805"/>
    </source>
</evidence>
<evidence type="ECO:0000256" key="3">
    <source>
        <dbReference type="SAM" id="MobiDB-lite"/>
    </source>
</evidence>
<evidence type="ECO:0000269" key="4">
    <source>
    </source>
</evidence>
<evidence type="ECO:0000303" key="5">
    <source>
    </source>
</evidence>
<evidence type="ECO:0000303" key="6">
    <source>
    </source>
</evidence>
<evidence type="ECO:0000305" key="7"/>
<protein>
    <recommendedName>
        <fullName>Troponin T, slow skeletal muscle</fullName>
        <shortName>TnTs</shortName>
    </recommendedName>
    <alternativeName>
        <fullName>Slow skeletal muscle troponin T</fullName>
        <shortName>sTnT</shortName>
    </alternativeName>
</protein>
<reference key="1">
    <citation type="journal article" date="1998" name="Gene">
        <title>Three alternatively spliced mouse slow skeletal muscle troponin T isoforms: conserved primary structure and regulated expression during postnatal development.</title>
        <authorList>
            <person name="Jin J.-P."/>
            <person name="Chen A."/>
            <person name="Huang Q.-Q."/>
        </authorList>
    </citation>
    <scope>NUCLEOTIDE SEQUENCE [MRNA] (ISOFORMS 1; 2 AND 3)</scope>
    <scope>TISSUE SPECIFICITY</scope>
    <scope>DEVELOPMENTAL STAGE</scope>
    <source>
        <strain>129/SvJ</strain>
        <tissue>Skeletal muscle</tissue>
    </source>
</reference>
<reference key="2">
    <citation type="journal article" date="2000" name="Mamm. Genome">
        <title>Genes encoding troponin I and troponin T are organized as three paralogous pairs in the mouse genome.</title>
        <authorList>
            <person name="Barton P.J.R."/>
            <person name="Mullen A.J."/>
            <person name="Cullen M.E."/>
            <person name="Dhoot G.K."/>
            <person name="Simon-Chazottes D."/>
            <person name="Guenet J.-L."/>
        </authorList>
    </citation>
    <scope>NUCLEOTIDE SEQUENCE [MRNA] (ISOFORM 1)</scope>
    <source>
        <tissue>Embryo</tissue>
    </source>
</reference>
<reference key="3">
    <citation type="journal article" date="1999" name="Gene">
        <title>Genomic sequence and structural organization of mouse slow skeletal muscle troponin T gene.</title>
        <authorList>
            <person name="Huang Q.-Q."/>
            <person name="Chen A."/>
            <person name="Jin J.-P."/>
        </authorList>
    </citation>
    <scope>NUCLEOTIDE SEQUENCE [GENOMIC DNA]</scope>
    <source>
        <strain>129</strain>
        <tissue>Skeletal muscle</tissue>
    </source>
</reference>
<reference key="4">
    <citation type="journal article" date="2004" name="Genome Res.">
        <title>The status, quality, and expansion of the NIH full-length cDNA project: the Mammalian Gene Collection (MGC).</title>
        <authorList>
            <consortium name="The MGC Project Team"/>
        </authorList>
    </citation>
    <scope>NUCLEOTIDE SEQUENCE [LARGE SCALE MRNA] (ISOFORMS 1 AND 3)</scope>
    <source>
        <tissue>Embryo</tissue>
    </source>
</reference>
<accession>O88346</accession>
<accession>B7ZNV5</accession>
<accession>B7ZNV6</accession>
<accession>O88795</accession>
<accession>Q9QUP7</accession>
<organism>
    <name type="scientific">Mus musculus</name>
    <name type="common">Mouse</name>
    <dbReference type="NCBI Taxonomy" id="10090"/>
    <lineage>
        <taxon>Eukaryota</taxon>
        <taxon>Metazoa</taxon>
        <taxon>Chordata</taxon>
        <taxon>Craniata</taxon>
        <taxon>Vertebrata</taxon>
        <taxon>Euteleostomi</taxon>
        <taxon>Mammalia</taxon>
        <taxon>Eutheria</taxon>
        <taxon>Euarchontoglires</taxon>
        <taxon>Glires</taxon>
        <taxon>Rodentia</taxon>
        <taxon>Myomorpha</taxon>
        <taxon>Muroidea</taxon>
        <taxon>Muridae</taxon>
        <taxon>Murinae</taxon>
        <taxon>Mus</taxon>
        <taxon>Mus</taxon>
    </lineage>
</organism>
<feature type="chain" id="PRO_0000186169" description="Troponin T, slow skeletal muscle">
    <location>
        <begin position="1"/>
        <end position="262"/>
    </location>
</feature>
<feature type="region of interest" description="Disordered" evidence="3">
    <location>
        <begin position="1"/>
        <end position="62"/>
    </location>
</feature>
<feature type="region of interest" description="Disordered" evidence="3">
    <location>
        <begin position="109"/>
        <end position="153"/>
    </location>
</feature>
<feature type="compositionally biased region" description="Acidic residues" evidence="3">
    <location>
        <begin position="1"/>
        <end position="31"/>
    </location>
</feature>
<feature type="compositionally biased region" description="Basic and acidic residues" evidence="3">
    <location>
        <begin position="32"/>
        <end position="41"/>
    </location>
</feature>
<feature type="compositionally biased region" description="Pro residues" evidence="3">
    <location>
        <begin position="43"/>
        <end position="55"/>
    </location>
</feature>
<feature type="compositionally biased region" description="Basic and acidic residues" evidence="3">
    <location>
        <begin position="109"/>
        <end position="149"/>
    </location>
</feature>
<feature type="modified residue" description="Phosphoserine; by CK2" evidence="1">
    <location>
        <position position="2"/>
    </location>
</feature>
<feature type="splice variant" id="VSP_013786" description="In isoform 3." evidence="5 6">
    <location>
        <begin position="24"/>
        <end position="35"/>
    </location>
</feature>
<feature type="splice variant" id="VSP_013787" description="In isoform 2." evidence="6">
    <location>
        <position position="38"/>
    </location>
</feature>
<comment type="function">
    <text>Troponin T is the tropomyosin-binding subunit of troponin, the thin filament regulatory complex which confers calcium-sensitivity to striated muscle actomyosin ATPase activity.</text>
</comment>
<comment type="subunit">
    <text evidence="2">Interacts with TPM3.</text>
</comment>
<comment type="alternative products">
    <event type="alternative splicing"/>
    <isoform>
        <id>O88346-1</id>
        <name>1</name>
        <name>High Mr-1</name>
        <sequence type="displayed"/>
    </isoform>
    <isoform>
        <id>O88346-2</id>
        <name>2</name>
        <name>High Mr-2</name>
        <sequence type="described" ref="VSP_013787"/>
    </isoform>
    <isoform>
        <id>O88346-3</id>
        <name>3</name>
        <name>Low Mr</name>
        <sequence type="described" ref="VSP_013786"/>
    </isoform>
</comment>
<comment type="tissue specificity">
    <text evidence="4">Expressed in adult soleus muscle.</text>
</comment>
<comment type="developmental stage">
    <text evidence="4">In masseter expression decreases during development and becomes undetectable 3 weeks after birth.</text>
</comment>
<comment type="miscellaneous">
    <molecule>Isoform 1</molecule>
    <text>Major.</text>
</comment>
<comment type="miscellaneous">
    <molecule>Isoform 2</molecule>
    <text evidence="7">Major.</text>
</comment>
<comment type="miscellaneous">
    <molecule>Isoform 3</molecule>
    <text evidence="7">Minor.</text>
</comment>
<comment type="similarity">
    <text evidence="7">Belongs to the troponin T family.</text>
</comment>
<name>TNNT1_MOUSE</name>
<sequence>MSDTEEQEYEEEQAEDEEAVEEEEAPEEPEPVAEREEERPKPSRPVVPPLIPPKIPEGERVDFDDIHRKRMEKDLLELQTLIDVHFEQRKKEEEELIALKDRIERRRAERAEQQRFRTEKERERQAKLAEEKMRKEEEEAKKRAEDDAKKKKVLSNMGAHFGGYLVKAEQKRGKRQTGREMKLRILSERKKPLNIDYMGEDQLREKAQELSEWIHQLESEKFDLMEKLKQQKYEINVLYNRISHAQKFRKGAGKGRVGGRWK</sequence>
<dbReference type="EMBL" id="AF020946">
    <property type="protein sequence ID" value="AAC32546.1"/>
    <property type="molecule type" value="mRNA"/>
</dbReference>
<dbReference type="EMBL" id="U92883">
    <property type="protein sequence ID" value="AAC32540.1"/>
    <property type="molecule type" value="mRNA"/>
</dbReference>
<dbReference type="EMBL" id="U92884">
    <property type="protein sequence ID" value="AAC32541.1"/>
    <property type="molecule type" value="mRNA"/>
</dbReference>
<dbReference type="EMBL" id="AJ131711">
    <property type="protein sequence ID" value="CAB38082.1"/>
    <property type="molecule type" value="mRNA"/>
</dbReference>
<dbReference type="EMBL" id="U92882">
    <property type="protein sequence ID" value="AAD00730.1"/>
    <property type="molecule type" value="Genomic_DNA"/>
</dbReference>
<dbReference type="EMBL" id="BC141142">
    <property type="protein sequence ID" value="AAI41143.1"/>
    <property type="molecule type" value="mRNA"/>
</dbReference>
<dbReference type="EMBL" id="BC145450">
    <property type="protein sequence ID" value="AAI45451.1"/>
    <property type="molecule type" value="mRNA"/>
</dbReference>
<dbReference type="EMBL" id="BC145451">
    <property type="protein sequence ID" value="AAI45452.1"/>
    <property type="molecule type" value="mRNA"/>
</dbReference>
<dbReference type="CCDS" id="CCDS51973.1">
    <molecule id="O88346-2"/>
</dbReference>
<dbReference type="CCDS" id="CCDS71879.1">
    <molecule id="O88346-3"/>
</dbReference>
<dbReference type="CCDS" id="CCDS71880.1">
    <molecule id="O88346-1"/>
</dbReference>
<dbReference type="RefSeq" id="NP_001264832.1">
    <molecule id="O88346-1"/>
    <property type="nucleotide sequence ID" value="NM_001277903.1"/>
</dbReference>
<dbReference type="RefSeq" id="NP_001264833.1">
    <molecule id="O88346-3"/>
    <property type="nucleotide sequence ID" value="NM_001277904.1"/>
</dbReference>
<dbReference type="RefSeq" id="NP_035748.1">
    <molecule id="O88346-2"/>
    <property type="nucleotide sequence ID" value="NM_011618.2"/>
</dbReference>
<dbReference type="SMR" id="O88346"/>
<dbReference type="FunCoup" id="O88346">
    <property type="interactions" value="52"/>
</dbReference>
<dbReference type="STRING" id="10090.ENSMUSP00000104228"/>
<dbReference type="iPTMnet" id="O88346"/>
<dbReference type="PhosphoSitePlus" id="O88346"/>
<dbReference type="jPOST" id="O88346"/>
<dbReference type="PaxDb" id="10090-ENSMUSP00000071704"/>
<dbReference type="ProteomicsDB" id="259602">
    <molecule id="O88346-1"/>
</dbReference>
<dbReference type="ProteomicsDB" id="259603">
    <molecule id="O88346-2"/>
</dbReference>
<dbReference type="ProteomicsDB" id="259604">
    <molecule id="O88346-3"/>
</dbReference>
<dbReference type="Antibodypedia" id="4195">
    <property type="antibodies" value="270 antibodies from 33 providers"/>
</dbReference>
<dbReference type="DNASU" id="21955"/>
<dbReference type="Ensembl" id="ENSMUST00000071798.13">
    <molecule id="O88346-2"/>
    <property type="protein sequence ID" value="ENSMUSP00000071704.7"/>
    <property type="gene ID" value="ENSMUSG00000064179.15"/>
</dbReference>
<dbReference type="Ensembl" id="ENSMUST00000108587.9">
    <molecule id="O88346-1"/>
    <property type="protein sequence ID" value="ENSMUSP00000104228.3"/>
    <property type="gene ID" value="ENSMUSG00000064179.15"/>
</dbReference>
<dbReference type="Ensembl" id="ENSMUST00000163710.8">
    <molecule id="O88346-3"/>
    <property type="protein sequence ID" value="ENSMUSP00000129626.2"/>
    <property type="gene ID" value="ENSMUSG00000064179.15"/>
</dbReference>
<dbReference type="GeneID" id="21955"/>
<dbReference type="KEGG" id="mmu:21955"/>
<dbReference type="UCSC" id="uc009exu.2">
    <molecule id="O88346-1"/>
    <property type="organism name" value="mouse"/>
</dbReference>
<dbReference type="UCSC" id="uc012ewu.2">
    <molecule id="O88346-3"/>
    <property type="organism name" value="mouse"/>
</dbReference>
<dbReference type="AGR" id="MGI:1333868"/>
<dbReference type="CTD" id="7138"/>
<dbReference type="MGI" id="MGI:1333868">
    <property type="gene designation" value="Tnnt1"/>
</dbReference>
<dbReference type="VEuPathDB" id="HostDB:ENSMUSG00000064179"/>
<dbReference type="eggNOG" id="KOG3634">
    <property type="taxonomic scope" value="Eukaryota"/>
</dbReference>
<dbReference type="GeneTree" id="ENSGT00940000160609"/>
<dbReference type="InParanoid" id="O88346"/>
<dbReference type="OMA" id="EWIYELE"/>
<dbReference type="OrthoDB" id="330499at2759"/>
<dbReference type="PhylomeDB" id="O88346"/>
<dbReference type="TreeFam" id="TF313321"/>
<dbReference type="Reactome" id="R-MMU-390522">
    <property type="pathway name" value="Striated Muscle Contraction"/>
</dbReference>
<dbReference type="BioGRID-ORCS" id="21955">
    <property type="hits" value="1 hit in 79 CRISPR screens"/>
</dbReference>
<dbReference type="PRO" id="PR:O88346"/>
<dbReference type="Proteomes" id="UP000000589">
    <property type="component" value="Chromosome 7"/>
</dbReference>
<dbReference type="RNAct" id="O88346">
    <property type="molecule type" value="protein"/>
</dbReference>
<dbReference type="Bgee" id="ENSMUSG00000064179">
    <property type="expression patterns" value="Expressed in soleus muscle and 190 other cell types or tissues"/>
</dbReference>
<dbReference type="ExpressionAtlas" id="O88346">
    <property type="expression patterns" value="baseline and differential"/>
</dbReference>
<dbReference type="GO" id="GO:0005861">
    <property type="term" value="C:troponin complex"/>
    <property type="evidence" value="ECO:0007669"/>
    <property type="project" value="Ensembl"/>
</dbReference>
<dbReference type="GO" id="GO:0005523">
    <property type="term" value="F:tropomyosin binding"/>
    <property type="evidence" value="ECO:0007669"/>
    <property type="project" value="Ensembl"/>
</dbReference>
<dbReference type="GO" id="GO:0031014">
    <property type="term" value="F:troponin T binding"/>
    <property type="evidence" value="ECO:0007669"/>
    <property type="project" value="Ensembl"/>
</dbReference>
<dbReference type="GO" id="GO:0045932">
    <property type="term" value="P:negative regulation of muscle contraction"/>
    <property type="evidence" value="ECO:0007669"/>
    <property type="project" value="Ensembl"/>
</dbReference>
<dbReference type="GO" id="GO:0031444">
    <property type="term" value="P:slow-twitch skeletal muscle fiber contraction"/>
    <property type="evidence" value="ECO:0007669"/>
    <property type="project" value="Ensembl"/>
</dbReference>
<dbReference type="GO" id="GO:0014883">
    <property type="term" value="P:transition between fast and slow fiber"/>
    <property type="evidence" value="ECO:0000314"/>
    <property type="project" value="MGI"/>
</dbReference>
<dbReference type="FunFam" id="1.20.5.350:FF:000001">
    <property type="entry name" value="Troponin T, fast skeletal muscle"/>
    <property type="match status" value="1"/>
</dbReference>
<dbReference type="Gene3D" id="1.20.5.350">
    <property type="match status" value="1"/>
</dbReference>
<dbReference type="InterPro" id="IPR027707">
    <property type="entry name" value="TNNT"/>
</dbReference>
<dbReference type="InterPro" id="IPR001978">
    <property type="entry name" value="Troponin"/>
</dbReference>
<dbReference type="InterPro" id="IPR038077">
    <property type="entry name" value="Troponin_sf"/>
</dbReference>
<dbReference type="PANTHER" id="PTHR11521">
    <property type="entry name" value="TROPONIN T"/>
    <property type="match status" value="1"/>
</dbReference>
<dbReference type="PANTHER" id="PTHR11521:SF6">
    <property type="entry name" value="TROPONIN T, SLOW SKELETAL MUSCLE"/>
    <property type="match status" value="1"/>
</dbReference>
<dbReference type="Pfam" id="PF00992">
    <property type="entry name" value="Troponin"/>
    <property type="match status" value="2"/>
</dbReference>
<dbReference type="SUPFAM" id="SSF90250">
    <property type="entry name" value="Troponin coil-coiled subunits"/>
    <property type="match status" value="1"/>
</dbReference>
<proteinExistence type="evidence at transcript level"/>